<comment type="function">
    <text evidence="1">The GINS complex plays an essential role in the initiation of DNA replication.</text>
</comment>
<comment type="subunit">
    <text evidence="1">Component of the GINS complex which is a heterotetramer of SLD5, PSF1, PSF2 and PSF3.</text>
</comment>
<comment type="subcellular location">
    <subcellularLocation>
        <location evidence="1">Nucleus</location>
    </subcellularLocation>
</comment>
<comment type="similarity">
    <text evidence="2">Belongs to the GINS1/PSF1 family.</text>
</comment>
<feature type="chain" id="PRO_0000410224" description="DNA replication complex GINS protein PSF1">
    <location>
        <begin position="1"/>
        <end position="218"/>
    </location>
</feature>
<sequence>MYGDLALQLVNSSHRTTLSSTPQLPLPKYALPLILSICLETRQLGTSIASIAESHGQLSLTQDRGLVCNLTVQHLAARRNKRCMLAYLATRVGGIKERWWDAGGGLAYLLSPAASASVNPEADAPDLRSALSPQELDFLRGYNNLLLDYKSDFLDVLDLTAGIEKPPGEIMVDVRVVRDAGEVFLDSGERVDFRKGQRFRLERAQVERLIIQGYLEEV</sequence>
<dbReference type="EMBL" id="AAEY01000038">
    <property type="protein sequence ID" value="EAL19641.1"/>
    <property type="molecule type" value="Genomic_DNA"/>
</dbReference>
<dbReference type="RefSeq" id="XP_774288.1">
    <property type="nucleotide sequence ID" value="XM_769195.1"/>
</dbReference>
<dbReference type="SMR" id="P0CQ29"/>
<dbReference type="EnsemblFungi" id="AAW44861">
    <property type="protein sequence ID" value="AAW44861"/>
    <property type="gene ID" value="CNG02090"/>
</dbReference>
<dbReference type="GeneID" id="4937304"/>
<dbReference type="KEGG" id="cnb:CNBG2690"/>
<dbReference type="VEuPathDB" id="FungiDB:CNBG2690"/>
<dbReference type="HOGENOM" id="CLU_079191_0_0_1"/>
<dbReference type="OrthoDB" id="2666at5206"/>
<dbReference type="GO" id="GO:0071162">
    <property type="term" value="C:CMG complex"/>
    <property type="evidence" value="ECO:0007669"/>
    <property type="project" value="EnsemblFungi"/>
</dbReference>
<dbReference type="GO" id="GO:0000811">
    <property type="term" value="C:GINS complex"/>
    <property type="evidence" value="ECO:0007669"/>
    <property type="project" value="EnsemblFungi"/>
</dbReference>
<dbReference type="GO" id="GO:0043596">
    <property type="term" value="C:nuclear replication fork"/>
    <property type="evidence" value="ECO:0007669"/>
    <property type="project" value="EnsemblFungi"/>
</dbReference>
<dbReference type="GO" id="GO:1902983">
    <property type="term" value="P:DNA strand elongation involved in mitotic DNA replication"/>
    <property type="evidence" value="ECO:0007669"/>
    <property type="project" value="TreeGrafter"/>
</dbReference>
<dbReference type="GO" id="GO:0000727">
    <property type="term" value="P:double-strand break repair via break-induced replication"/>
    <property type="evidence" value="ECO:0007669"/>
    <property type="project" value="EnsemblFungi"/>
</dbReference>
<dbReference type="CDD" id="cd11710">
    <property type="entry name" value="GINS_A_psf1"/>
    <property type="match status" value="1"/>
</dbReference>
<dbReference type="CDD" id="cd21696">
    <property type="entry name" value="GINS_B_Psf1"/>
    <property type="match status" value="1"/>
</dbReference>
<dbReference type="FunFam" id="1.20.58.1030:FF:000003">
    <property type="entry name" value="DNA replication complex GINS protein PSF1"/>
    <property type="match status" value="1"/>
</dbReference>
<dbReference type="Gene3D" id="1.20.58.1030">
    <property type="match status" value="1"/>
</dbReference>
<dbReference type="InterPro" id="IPR021151">
    <property type="entry name" value="GINS_A"/>
</dbReference>
<dbReference type="InterPro" id="IPR036224">
    <property type="entry name" value="GINS_bundle-like_dom_sf"/>
</dbReference>
<dbReference type="InterPro" id="IPR005339">
    <property type="entry name" value="GINS_Psf1"/>
</dbReference>
<dbReference type="InterPro" id="IPR056783">
    <property type="entry name" value="PSF1_C"/>
</dbReference>
<dbReference type="PANTHER" id="PTHR12914:SF2">
    <property type="entry name" value="DNA REPLICATION COMPLEX GINS PROTEIN PSF1"/>
    <property type="match status" value="1"/>
</dbReference>
<dbReference type="PANTHER" id="PTHR12914">
    <property type="entry name" value="PARTNER OF SLD5"/>
    <property type="match status" value="1"/>
</dbReference>
<dbReference type="Pfam" id="PF24997">
    <property type="entry name" value="PSF1_C"/>
    <property type="match status" value="1"/>
</dbReference>
<dbReference type="Pfam" id="PF05916">
    <property type="entry name" value="Sld5"/>
    <property type="match status" value="1"/>
</dbReference>
<dbReference type="SUPFAM" id="SSF158573">
    <property type="entry name" value="GINS helical bundle-like"/>
    <property type="match status" value="1"/>
</dbReference>
<evidence type="ECO:0000250" key="1"/>
<evidence type="ECO:0000305" key="2"/>
<accession>P0CQ29</accession>
<accession>Q55PE3</accession>
<accession>Q5KE14</accession>
<name>PSF1_CRYNB</name>
<keyword id="KW-0235">DNA replication</keyword>
<keyword id="KW-0539">Nucleus</keyword>
<organism>
    <name type="scientific">Cryptococcus neoformans var. neoformans serotype D (strain B-3501A)</name>
    <name type="common">Filobasidiella neoformans</name>
    <dbReference type="NCBI Taxonomy" id="283643"/>
    <lineage>
        <taxon>Eukaryota</taxon>
        <taxon>Fungi</taxon>
        <taxon>Dikarya</taxon>
        <taxon>Basidiomycota</taxon>
        <taxon>Agaricomycotina</taxon>
        <taxon>Tremellomycetes</taxon>
        <taxon>Tremellales</taxon>
        <taxon>Cryptococcaceae</taxon>
        <taxon>Cryptococcus</taxon>
        <taxon>Cryptococcus neoformans species complex</taxon>
    </lineage>
</organism>
<protein>
    <recommendedName>
        <fullName>DNA replication complex GINS protein PSF1</fullName>
    </recommendedName>
</protein>
<reference key="1">
    <citation type="journal article" date="2005" name="Science">
        <title>The genome of the basidiomycetous yeast and human pathogen Cryptococcus neoformans.</title>
        <authorList>
            <person name="Loftus B.J."/>
            <person name="Fung E."/>
            <person name="Roncaglia P."/>
            <person name="Rowley D."/>
            <person name="Amedeo P."/>
            <person name="Bruno D."/>
            <person name="Vamathevan J."/>
            <person name="Miranda M."/>
            <person name="Anderson I.J."/>
            <person name="Fraser J.A."/>
            <person name="Allen J.E."/>
            <person name="Bosdet I.E."/>
            <person name="Brent M.R."/>
            <person name="Chiu R."/>
            <person name="Doering T.L."/>
            <person name="Donlin M.J."/>
            <person name="D'Souza C.A."/>
            <person name="Fox D.S."/>
            <person name="Grinberg V."/>
            <person name="Fu J."/>
            <person name="Fukushima M."/>
            <person name="Haas B.J."/>
            <person name="Huang J.C."/>
            <person name="Janbon G."/>
            <person name="Jones S.J.M."/>
            <person name="Koo H.L."/>
            <person name="Krzywinski M.I."/>
            <person name="Kwon-Chung K.J."/>
            <person name="Lengeler K.B."/>
            <person name="Maiti R."/>
            <person name="Marra M.A."/>
            <person name="Marra R.E."/>
            <person name="Mathewson C.A."/>
            <person name="Mitchell T.G."/>
            <person name="Pertea M."/>
            <person name="Riggs F.R."/>
            <person name="Salzberg S.L."/>
            <person name="Schein J.E."/>
            <person name="Shvartsbeyn A."/>
            <person name="Shin H."/>
            <person name="Shumway M."/>
            <person name="Specht C.A."/>
            <person name="Suh B.B."/>
            <person name="Tenney A."/>
            <person name="Utterback T.R."/>
            <person name="Wickes B.L."/>
            <person name="Wortman J.R."/>
            <person name="Wye N.H."/>
            <person name="Kronstad J.W."/>
            <person name="Lodge J.K."/>
            <person name="Heitman J."/>
            <person name="Davis R.W."/>
            <person name="Fraser C.M."/>
            <person name="Hyman R.W."/>
        </authorList>
    </citation>
    <scope>NUCLEOTIDE SEQUENCE [LARGE SCALE GENOMIC DNA]</scope>
    <source>
        <strain>B-3501A</strain>
    </source>
</reference>
<gene>
    <name type="primary">PSF1</name>
    <name type="ordered locus">CNBG2690</name>
</gene>
<proteinExistence type="inferred from homology"/>